<dbReference type="EC" id="6.3.4.3" evidence="1"/>
<dbReference type="EMBL" id="CP000792">
    <property type="protein sequence ID" value="ABW74745.1"/>
    <property type="molecule type" value="Genomic_DNA"/>
</dbReference>
<dbReference type="RefSeq" id="WP_048809763.1">
    <property type="nucleotide sequence ID" value="NC_009802.2"/>
</dbReference>
<dbReference type="SMR" id="A8Z6G1"/>
<dbReference type="STRING" id="360104.CCC13826_1498"/>
<dbReference type="KEGG" id="cco:CCC13826_1498"/>
<dbReference type="eggNOG" id="COG2759">
    <property type="taxonomic scope" value="Bacteria"/>
</dbReference>
<dbReference type="HOGENOM" id="CLU_003601_3_3_7"/>
<dbReference type="OrthoDB" id="9761733at2"/>
<dbReference type="UniPathway" id="UPA00193"/>
<dbReference type="Proteomes" id="UP000001121">
    <property type="component" value="Chromosome"/>
</dbReference>
<dbReference type="GO" id="GO:0005524">
    <property type="term" value="F:ATP binding"/>
    <property type="evidence" value="ECO:0007669"/>
    <property type="project" value="UniProtKB-UniRule"/>
</dbReference>
<dbReference type="GO" id="GO:0004329">
    <property type="term" value="F:formate-tetrahydrofolate ligase activity"/>
    <property type="evidence" value="ECO:0007669"/>
    <property type="project" value="UniProtKB-UniRule"/>
</dbReference>
<dbReference type="GO" id="GO:0035999">
    <property type="term" value="P:tetrahydrofolate interconversion"/>
    <property type="evidence" value="ECO:0007669"/>
    <property type="project" value="UniProtKB-UniRule"/>
</dbReference>
<dbReference type="CDD" id="cd00477">
    <property type="entry name" value="FTHFS"/>
    <property type="match status" value="1"/>
</dbReference>
<dbReference type="FunFam" id="3.30.1510.10:FF:000001">
    <property type="entry name" value="Formate--tetrahydrofolate ligase"/>
    <property type="match status" value="1"/>
</dbReference>
<dbReference type="Gene3D" id="3.30.1510.10">
    <property type="entry name" value="Domain 2, N(10)-formyltetrahydrofolate synthetase"/>
    <property type="match status" value="1"/>
</dbReference>
<dbReference type="Gene3D" id="3.10.410.10">
    <property type="entry name" value="Formyltetrahydrofolate synthetase, domain 3"/>
    <property type="match status" value="1"/>
</dbReference>
<dbReference type="Gene3D" id="3.40.50.300">
    <property type="entry name" value="P-loop containing nucleotide triphosphate hydrolases"/>
    <property type="match status" value="1"/>
</dbReference>
<dbReference type="HAMAP" id="MF_01543">
    <property type="entry name" value="FTHFS"/>
    <property type="match status" value="1"/>
</dbReference>
<dbReference type="InterPro" id="IPR000559">
    <property type="entry name" value="Formate_THF_ligase"/>
</dbReference>
<dbReference type="InterPro" id="IPR020628">
    <property type="entry name" value="Formate_THF_ligase_CS"/>
</dbReference>
<dbReference type="InterPro" id="IPR027417">
    <property type="entry name" value="P-loop_NTPase"/>
</dbReference>
<dbReference type="NCBIfam" id="NF010030">
    <property type="entry name" value="PRK13505.1"/>
    <property type="match status" value="1"/>
</dbReference>
<dbReference type="Pfam" id="PF01268">
    <property type="entry name" value="FTHFS"/>
    <property type="match status" value="1"/>
</dbReference>
<dbReference type="SUPFAM" id="SSF52540">
    <property type="entry name" value="P-loop containing nucleoside triphosphate hydrolases"/>
    <property type="match status" value="1"/>
</dbReference>
<dbReference type="PROSITE" id="PS00721">
    <property type="entry name" value="FTHFS_1"/>
    <property type="match status" value="1"/>
</dbReference>
<proteinExistence type="inferred from homology"/>
<feature type="chain" id="PRO_1000073554" description="Formate--tetrahydrofolate ligase">
    <location>
        <begin position="1"/>
        <end position="549"/>
    </location>
</feature>
<feature type="binding site" evidence="1">
    <location>
        <begin position="60"/>
        <end position="67"/>
    </location>
    <ligand>
        <name>ATP</name>
        <dbReference type="ChEBI" id="CHEBI:30616"/>
    </ligand>
</feature>
<name>FTHS_CAMC1</name>
<reference key="1">
    <citation type="submission" date="2007-10" db="EMBL/GenBank/DDBJ databases">
        <title>Genome sequence of Campylobacter concisus 13826 isolated from human feces.</title>
        <authorList>
            <person name="Fouts D.E."/>
            <person name="Mongodin E.F."/>
            <person name="Puiu D."/>
            <person name="Sebastian Y."/>
            <person name="Miller W.G."/>
            <person name="Mandrell R.E."/>
            <person name="On S."/>
            <person name="Nelson K.E."/>
        </authorList>
    </citation>
    <scope>NUCLEOTIDE SEQUENCE [LARGE SCALE GENOMIC DNA]</scope>
    <source>
        <strain>13826</strain>
    </source>
</reference>
<comment type="catalytic activity">
    <reaction evidence="1">
        <text>(6S)-5,6,7,8-tetrahydrofolate + formate + ATP = (6R)-10-formyltetrahydrofolate + ADP + phosphate</text>
        <dbReference type="Rhea" id="RHEA:20221"/>
        <dbReference type="ChEBI" id="CHEBI:15740"/>
        <dbReference type="ChEBI" id="CHEBI:30616"/>
        <dbReference type="ChEBI" id="CHEBI:43474"/>
        <dbReference type="ChEBI" id="CHEBI:57453"/>
        <dbReference type="ChEBI" id="CHEBI:195366"/>
        <dbReference type="ChEBI" id="CHEBI:456216"/>
        <dbReference type="EC" id="6.3.4.3"/>
    </reaction>
</comment>
<comment type="pathway">
    <text evidence="1">One-carbon metabolism; tetrahydrofolate interconversion.</text>
</comment>
<comment type="similarity">
    <text evidence="1">Belongs to the formate--tetrahydrofolate ligase family.</text>
</comment>
<accession>A8Z6G1</accession>
<sequence>MLSDIEITHQTKLEHISKVAAKLGLNEDELELYGKFKAKISPRLEPSNSKLILVTATNPTPYGEGKTTMSIGLADALNSLNKKVCLALREPSLGPVFGIKGGAAGGGYSQLAPMEDLNLHFTGDFHAITSANNLISAMIDNSLYQENPLKIEKILWKRCMDMNDRALRFITVGQGGRTDGVPREDGFNITAASEIMAVLCLATSLSDLKERVANIMVAYDSDKKPIYVRDLGCEDAVCILLKDAIKPNLFQTLEHTPTLVHGGPFANIAHGCNSVIATKTALNLADYVITEAGFGSELGAEKFLDIKCRVAEIKPSAVVLVSTIRSLKYNGEANKDEITKPDMNALKKGIENLGGHIENLKGKFGQNVVVALNKFGFDTDEEINFVKEYCQKLGIEVAVCENFLKGGKGALELAELVLKACDKPSKINFTYEMSDDTKTKIEKVAKEIYGAGEVVFEEAALKKLEMIKELNLSHLPVCIAKTQYSFSDDAKLLGRAKGFTFSVKDLDIRTGAGFIVAVCGKIMLMPGLPKVPAAVNMKIDAEGKIDGLS</sequence>
<keyword id="KW-0067">ATP-binding</keyword>
<keyword id="KW-0436">Ligase</keyword>
<keyword id="KW-0547">Nucleotide-binding</keyword>
<keyword id="KW-0554">One-carbon metabolism</keyword>
<protein>
    <recommendedName>
        <fullName evidence="1">Formate--tetrahydrofolate ligase</fullName>
        <ecNumber evidence="1">6.3.4.3</ecNumber>
    </recommendedName>
    <alternativeName>
        <fullName evidence="1">Formyltetrahydrofolate synthetase</fullName>
        <shortName evidence="1">FHS</shortName>
        <shortName evidence="1">FTHFS</shortName>
    </alternativeName>
</protein>
<evidence type="ECO:0000255" key="1">
    <source>
        <dbReference type="HAMAP-Rule" id="MF_01543"/>
    </source>
</evidence>
<organism>
    <name type="scientific">Campylobacter concisus (strain 13826)</name>
    <dbReference type="NCBI Taxonomy" id="360104"/>
    <lineage>
        <taxon>Bacteria</taxon>
        <taxon>Pseudomonadati</taxon>
        <taxon>Campylobacterota</taxon>
        <taxon>Epsilonproteobacteria</taxon>
        <taxon>Campylobacterales</taxon>
        <taxon>Campylobacteraceae</taxon>
        <taxon>Campylobacter</taxon>
    </lineage>
</organism>
<gene>
    <name evidence="1" type="primary">fhs</name>
    <name type="ordered locus">Ccon26_04790</name>
    <name type="ORF">CCC13826_1498</name>
</gene>